<feature type="chain" id="PRO_0000066917" description="POTE ankyrin domain family member B">
    <location>
        <begin position="1"/>
        <end position="544"/>
    </location>
</feature>
<feature type="repeat" description="ANK 1" evidence="2">
    <location>
        <begin position="135"/>
        <end position="167"/>
    </location>
</feature>
<feature type="repeat" description="ANK 2" evidence="2">
    <location>
        <begin position="168"/>
        <end position="200"/>
    </location>
</feature>
<feature type="repeat" description="ANK 3" evidence="2">
    <location>
        <begin position="201"/>
        <end position="233"/>
    </location>
</feature>
<feature type="repeat" description="ANK 4" evidence="2">
    <location>
        <begin position="234"/>
        <end position="266"/>
    </location>
</feature>
<feature type="repeat" description="ANK 5" evidence="2">
    <location>
        <begin position="267"/>
        <end position="299"/>
    </location>
</feature>
<feature type="region of interest" description="Disordered" evidence="3">
    <location>
        <begin position="332"/>
        <end position="457"/>
    </location>
</feature>
<feature type="coiled-coil region" evidence="1">
    <location>
        <begin position="457"/>
        <end position="538"/>
    </location>
</feature>
<feature type="compositionally biased region" description="Basic and acidic residues" evidence="3">
    <location>
        <begin position="340"/>
        <end position="355"/>
    </location>
</feature>
<feature type="compositionally biased region" description="Basic and acidic residues" evidence="3">
    <location>
        <begin position="364"/>
        <end position="375"/>
    </location>
</feature>
<feature type="compositionally biased region" description="Polar residues" evidence="3">
    <location>
        <begin position="439"/>
        <end position="457"/>
    </location>
</feature>
<feature type="sequence variant" id="VAR_080177" description="In dbSNP:rs1470504102." evidence="4">
    <original>E</original>
    <variation>Q</variation>
    <location>
        <position position="249"/>
    </location>
</feature>
<feature type="sequence variant" id="VAR_080178" evidence="4">
    <original>L</original>
    <variation>S</variation>
    <location>
        <position position="492"/>
    </location>
</feature>
<feature type="sequence variant" id="VAR_080179" description="In dbSNP:rs1340702692." evidence="4">
    <original>K</original>
    <variation>M</variation>
    <location>
        <position position="498"/>
    </location>
</feature>
<feature type="sequence variant" id="VAR_080180" description="In dbSNP:rs1269910098." evidence="4">
    <original>T</original>
    <variation>A</variation>
    <location>
        <position position="531"/>
    </location>
</feature>
<reference key="1">
    <citation type="journal article" date="2006" name="Nature">
        <title>Analysis of the DNA sequence and duplication history of human chromosome 15.</title>
        <authorList>
            <person name="Zody M.C."/>
            <person name="Garber M."/>
            <person name="Sharpe T."/>
            <person name="Young S.K."/>
            <person name="Rowen L."/>
            <person name="O'Neill K."/>
            <person name="Whittaker C.A."/>
            <person name="Kamal M."/>
            <person name="Chang J.L."/>
            <person name="Cuomo C.A."/>
            <person name="Dewar K."/>
            <person name="FitzGerald M.G."/>
            <person name="Kodira C.D."/>
            <person name="Madan A."/>
            <person name="Qin S."/>
            <person name="Yang X."/>
            <person name="Abbasi N."/>
            <person name="Abouelleil A."/>
            <person name="Arachchi H.M."/>
            <person name="Baradarani L."/>
            <person name="Birditt B."/>
            <person name="Bloom S."/>
            <person name="Bloom T."/>
            <person name="Borowsky M.L."/>
            <person name="Burke J."/>
            <person name="Butler J."/>
            <person name="Cook A."/>
            <person name="DeArellano K."/>
            <person name="DeCaprio D."/>
            <person name="Dorris L. III"/>
            <person name="Dors M."/>
            <person name="Eichler E.E."/>
            <person name="Engels R."/>
            <person name="Fahey J."/>
            <person name="Fleetwood P."/>
            <person name="Friedman C."/>
            <person name="Gearin G."/>
            <person name="Hall J.L."/>
            <person name="Hensley G."/>
            <person name="Johnson E."/>
            <person name="Jones C."/>
            <person name="Kamat A."/>
            <person name="Kaur A."/>
            <person name="Locke D.P."/>
            <person name="Madan A."/>
            <person name="Munson G."/>
            <person name="Jaffe D.B."/>
            <person name="Lui A."/>
            <person name="Macdonald P."/>
            <person name="Mauceli E."/>
            <person name="Naylor J.W."/>
            <person name="Nesbitt R."/>
            <person name="Nicol R."/>
            <person name="O'Leary S.B."/>
            <person name="Ratcliffe A."/>
            <person name="Rounsley S."/>
            <person name="She X."/>
            <person name="Sneddon K.M.B."/>
            <person name="Stewart S."/>
            <person name="Sougnez C."/>
            <person name="Stone S.M."/>
            <person name="Topham K."/>
            <person name="Vincent D."/>
            <person name="Wang S."/>
            <person name="Zimmer A.R."/>
            <person name="Birren B.W."/>
            <person name="Hood L."/>
            <person name="Lander E.S."/>
            <person name="Nusbaum C."/>
        </authorList>
    </citation>
    <scope>NUCLEOTIDE SEQUENCE [LARGE SCALE GENOMIC DNA]</scope>
</reference>
<reference evidence="7" key="2">
    <citation type="journal article" date="2004" name="Genome Res.">
        <title>The status, quality, and expansion of the NIH full-length cDNA project: the Mammalian Gene Collection (MGC).</title>
        <authorList>
            <consortium name="The MGC Project Team"/>
        </authorList>
    </citation>
    <scope>NUCLEOTIDE SEQUENCE [LARGE SCALE MRNA]</scope>
    <scope>VARIANTS GLN-249; SER-492; MET-498 AND ALA-531</scope>
</reference>
<reference key="3">
    <citation type="journal article" date="2004" name="Gene">
        <title>Five POTE paralogs and their splice variants are expressed in human prostate and encode proteins of different lengths.</title>
        <authorList>
            <person name="Bera T.K."/>
            <person name="Huynh N."/>
            <person name="Maeda H."/>
            <person name="Sathyanarayana B.K."/>
            <person name="Lee B."/>
            <person name="Pastan I."/>
        </authorList>
    </citation>
    <scope>CHARACTERIZATION</scope>
    <source>
        <tissue>Prostate</tissue>
    </source>
</reference>
<protein>
    <recommendedName>
        <fullName evidence="6">POTE ankyrin domain family member B</fullName>
    </recommendedName>
    <alternativeName>
        <fullName evidence="6">ANKRD26-like family B member 1</fullName>
    </alternativeName>
    <alternativeName>
        <fullName evidence="5">Prostate, ovary, testis-expressed protein on chromosome 15</fullName>
        <shortName evidence="5">POTE-15</shortName>
    </alternativeName>
</protein>
<proteinExistence type="evidence at protein level"/>
<organism>
    <name type="scientific">Homo sapiens</name>
    <name type="common">Human</name>
    <dbReference type="NCBI Taxonomy" id="9606"/>
    <lineage>
        <taxon>Eukaryota</taxon>
        <taxon>Metazoa</taxon>
        <taxon>Chordata</taxon>
        <taxon>Craniata</taxon>
        <taxon>Vertebrata</taxon>
        <taxon>Euteleostomi</taxon>
        <taxon>Mammalia</taxon>
        <taxon>Eutheria</taxon>
        <taxon>Euarchontoglires</taxon>
        <taxon>Primates</taxon>
        <taxon>Haplorrhini</taxon>
        <taxon>Catarrhini</taxon>
        <taxon>Hominidae</taxon>
        <taxon>Homo</taxon>
    </lineage>
</organism>
<dbReference type="EMBL" id="AC183089">
    <property type="status" value="NOT_ANNOTATED_CDS"/>
    <property type="molecule type" value="Genomic_DNA"/>
</dbReference>
<dbReference type="EMBL" id="BC101005">
    <property type="protein sequence ID" value="AAI01006.1"/>
    <property type="molecule type" value="mRNA"/>
</dbReference>
<dbReference type="CCDS" id="CCDS59250.1"/>
<dbReference type="RefSeq" id="NP_001264232.1">
    <property type="nucleotide sequence ID" value="NM_001277303.1"/>
</dbReference>
<dbReference type="RefSeq" id="NP_001264233.1">
    <property type="nucleotide sequence ID" value="NM_001277304.2"/>
</dbReference>
<dbReference type="SMR" id="A0A0A6YYL3"/>
<dbReference type="FunCoup" id="A0A0A6YYL3">
    <property type="interactions" value="1"/>
</dbReference>
<dbReference type="IntAct" id="A0A0A6YYL3">
    <property type="interactions" value="5"/>
</dbReference>
<dbReference type="iPTMnet" id="A0A0A6YYL3"/>
<dbReference type="PhosphoSitePlus" id="A0A0A6YYL3"/>
<dbReference type="jPOST" id="A0A0A6YYL3"/>
<dbReference type="MassIVE" id="A0A0A6YYL3"/>
<dbReference type="PeptideAtlas" id="A0A0A6YYL3"/>
<dbReference type="Antibodypedia" id="65185">
    <property type="antibodies" value="7 antibodies from 4 providers"/>
</dbReference>
<dbReference type="DNASU" id="100996331"/>
<dbReference type="Ensembl" id="ENST00000439682.2">
    <property type="protein sequence ID" value="ENSP00000457689.2"/>
    <property type="gene ID" value="ENSG00000233917.9"/>
</dbReference>
<dbReference type="GeneID" id="100287399"/>
<dbReference type="GeneID" id="100996331"/>
<dbReference type="KEGG" id="hsa:100287399"/>
<dbReference type="KEGG" id="hsa:100996331"/>
<dbReference type="MANE-Select" id="ENST00000439682.2">
    <property type="protein sequence ID" value="ENSP00000457689.2"/>
    <property type="RefSeq nucleotide sequence ID" value="NM_001277304.2"/>
    <property type="RefSeq protein sequence ID" value="NP_001264233.1"/>
</dbReference>
<dbReference type="AGR" id="HGNC:33734"/>
<dbReference type="AGR" id="HGNC:48327"/>
<dbReference type="CTD" id="100996331"/>
<dbReference type="DisGeNET" id="100996331"/>
<dbReference type="GeneCards" id="POTEB"/>
<dbReference type="HGNC" id="HGNC:33734">
    <property type="gene designation" value="POTEB"/>
</dbReference>
<dbReference type="HPA" id="ENSG00000233917">
    <property type="expression patterns" value="Tissue enriched (testis)"/>
</dbReference>
<dbReference type="MIM" id="608912">
    <property type="type" value="gene"/>
</dbReference>
<dbReference type="neXtProt" id="NX_A0A0A6YYL3"/>
<dbReference type="VEuPathDB" id="HostDB:ENSG00000233917"/>
<dbReference type="HOGENOM" id="CLU_000134_9_2_1"/>
<dbReference type="InParanoid" id="A0A0A6YYL3"/>
<dbReference type="OrthoDB" id="9537854at2759"/>
<dbReference type="PAN-GO" id="A0A0A6YYL3">
    <property type="GO annotations" value="0 GO annotations based on evolutionary models"/>
</dbReference>
<dbReference type="PhylomeDB" id="A0A0A6YYL3"/>
<dbReference type="PathwayCommons" id="A0A0A6YYL3"/>
<dbReference type="BioGRID-ORCS" id="100287399">
    <property type="hits" value="16 hits in 242 CRISPR screens"/>
</dbReference>
<dbReference type="BioGRID-ORCS" id="100996331">
    <property type="hits" value="8 hits in 607 CRISPR screens"/>
</dbReference>
<dbReference type="Pharos" id="A0A0A6YYL3">
    <property type="development level" value="Tdark"/>
</dbReference>
<dbReference type="PRO" id="PR:A0A0A6YYL3"/>
<dbReference type="Proteomes" id="UP000005640">
    <property type="component" value="Chromosome 15"/>
</dbReference>
<dbReference type="Bgee" id="ENSG00000233917">
    <property type="expression patterns" value="Expressed in male germ line stem cell (sensu Vertebrata) in testis and 7 other cell types or tissues"/>
</dbReference>
<dbReference type="ExpressionAtlas" id="A0A0A6YYL3">
    <property type="expression patterns" value="baseline"/>
</dbReference>
<dbReference type="Gene3D" id="1.25.40.20">
    <property type="entry name" value="Ankyrin repeat-containing domain"/>
    <property type="match status" value="1"/>
</dbReference>
<dbReference type="InterPro" id="IPR050657">
    <property type="entry name" value="Ankyrin_repeat_domain"/>
</dbReference>
<dbReference type="InterPro" id="IPR002110">
    <property type="entry name" value="Ankyrin_rpt"/>
</dbReference>
<dbReference type="InterPro" id="IPR036770">
    <property type="entry name" value="Ankyrin_rpt-contain_sf"/>
</dbReference>
<dbReference type="InterPro" id="IPR039497">
    <property type="entry name" value="CC144C-like_CC_dom"/>
</dbReference>
<dbReference type="PANTHER" id="PTHR24147">
    <property type="entry name" value="ANKYRIN REPEAT DOMAIN 36-RELATED"/>
    <property type="match status" value="1"/>
</dbReference>
<dbReference type="PANTHER" id="PTHR24147:SF66">
    <property type="entry name" value="POTE ANKYRIN DOMAIN FAMILY MEMBER D"/>
    <property type="match status" value="1"/>
</dbReference>
<dbReference type="Pfam" id="PF12796">
    <property type="entry name" value="Ank_2"/>
    <property type="match status" value="2"/>
</dbReference>
<dbReference type="Pfam" id="PF14915">
    <property type="entry name" value="CCDC144C"/>
    <property type="match status" value="1"/>
</dbReference>
<dbReference type="PRINTS" id="PR01415">
    <property type="entry name" value="ANKYRIN"/>
</dbReference>
<dbReference type="SMART" id="SM00248">
    <property type="entry name" value="ANK"/>
    <property type="match status" value="6"/>
</dbReference>
<dbReference type="SUPFAM" id="SSF48403">
    <property type="entry name" value="Ankyrin repeat"/>
    <property type="match status" value="1"/>
</dbReference>
<dbReference type="PROSITE" id="PS50297">
    <property type="entry name" value="ANK_REP_REGION"/>
    <property type="match status" value="1"/>
</dbReference>
<dbReference type="PROSITE" id="PS50088">
    <property type="entry name" value="ANK_REPEAT"/>
    <property type="match status" value="5"/>
</dbReference>
<name>POTEB_HUMAN</name>
<sequence>MVAEVCSMPAASAVKKPFDLRSKMGKWCHHRFPCCRGSGTSNVGTSGDHDDSFMKTLRSKMGKWCCHCFPCCRGSGKSNVGTWGDYDDSAFMEPRYHVRREDLDKLHRAAWWGKVPRKDLIVMLRDTDMNKRDKQKRTALHLASANGNSEVVQLLLDRRCQLNVLDNKKRTALIKAVQCQEDECVLMLLEHGADGNIQDEYGNTALHYAIYNEDKLMAKALLLYGADIESKNKCGLTPLLLGVHEQKQEVVKFLIKKKANLNALDRYGRTALILAVCCGSASIVNLLLEQNVDVSSQDLSGQTAREYAVSSHHHVICELLSDYKEKQMLKISSENSNPEQDLKLTSEEESQRLKVSENSQPEKMSQEPEINKDCDREVEEEIKKHGSNPVGLPENLTNGASAGNGDDGLIPQRKSRKPENQQFPDTENEEYHSDEQNDTQKQLSEEQNTGISQDEILTNKQKQIEVAEKEMNSELSLSHKKEEDLLRENSMLREEIAKLRLELDETKHQNQLRENKILEEIESVKEKLLKTIQLNEEALTKTSI</sequence>
<gene>
    <name evidence="8" type="primary">POTEB</name>
</gene>
<keyword id="KW-0040">ANK repeat</keyword>
<keyword id="KW-0175">Coiled coil</keyword>
<keyword id="KW-1185">Reference proteome</keyword>
<keyword id="KW-0677">Repeat</keyword>
<evidence type="ECO:0000255" key="1"/>
<evidence type="ECO:0000255" key="2">
    <source>
        <dbReference type="PROSITE-ProRule" id="PRU00023"/>
    </source>
</evidence>
<evidence type="ECO:0000256" key="3">
    <source>
        <dbReference type="SAM" id="MobiDB-lite"/>
    </source>
</evidence>
<evidence type="ECO:0000269" key="4">
    <source>
    </source>
</evidence>
<evidence type="ECO:0000303" key="5">
    <source>
    </source>
</evidence>
<evidence type="ECO:0000305" key="6"/>
<evidence type="ECO:0000312" key="7">
    <source>
        <dbReference type="EMBL" id="AAI01006.1"/>
    </source>
</evidence>
<evidence type="ECO:0000312" key="8">
    <source>
        <dbReference type="HGNC" id="HGNC:33734"/>
    </source>
</evidence>
<accession>A0A0A6YYL3</accession>
<accession>Q495V7</accession>
<comment type="similarity">
    <text evidence="6">Belongs to the POTE family.</text>
</comment>
<comment type="caution">
    <text evidence="6">Maps to a duplicated region on chromosome 15; the gene is present in at least 3 almost identical copies.</text>
</comment>